<geneLocation type="plasmid" evidence="3">
    <name>pAtK84b</name>
</geneLocation>
<protein>
    <recommendedName>
        <fullName evidence="1">N-acyl homoserine lactonase AiiB</fullName>
        <shortName evidence="1">AHL-lactonase AiiB</shortName>
        <ecNumber>3.1.1.81</ecNumber>
    </recommendedName>
</protein>
<organism>
    <name type="scientific">Rhizobium rhizogenes (strain K84 / ATCC BAA-868)</name>
    <name type="common">Agrobacterium radiobacter</name>
    <dbReference type="NCBI Taxonomy" id="311403"/>
    <lineage>
        <taxon>Bacteria</taxon>
        <taxon>Pseudomonadati</taxon>
        <taxon>Pseudomonadota</taxon>
        <taxon>Alphaproteobacteria</taxon>
        <taxon>Hyphomicrobiales</taxon>
        <taxon>Rhizobiaceae</taxon>
        <taxon>Rhizobium/Agrobacterium group</taxon>
        <taxon>Rhizobium</taxon>
    </lineage>
</organism>
<reference key="1">
    <citation type="journal article" date="2009" name="J. Bacteriol.">
        <title>Genome sequences of three Agrobacterium biovars help elucidate the evolution of multichromosome genomes in bacteria.</title>
        <authorList>
            <person name="Slater S.C."/>
            <person name="Goldman B.S."/>
            <person name="Goodner B."/>
            <person name="Setubal J.C."/>
            <person name="Farrand S.K."/>
            <person name="Nester E.W."/>
            <person name="Burr T.J."/>
            <person name="Banta L."/>
            <person name="Dickerman A.W."/>
            <person name="Paulsen I."/>
            <person name="Otten L."/>
            <person name="Suen G."/>
            <person name="Welch R."/>
            <person name="Almeida N.F."/>
            <person name="Arnold F."/>
            <person name="Burton O.T."/>
            <person name="Du Z."/>
            <person name="Ewing A."/>
            <person name="Godsy E."/>
            <person name="Heisel S."/>
            <person name="Houmiel K.L."/>
            <person name="Jhaveri J."/>
            <person name="Lu J."/>
            <person name="Miller N.M."/>
            <person name="Norton S."/>
            <person name="Chen Q."/>
            <person name="Phoolcharoen W."/>
            <person name="Ohlin V."/>
            <person name="Ondrusek D."/>
            <person name="Pride N."/>
            <person name="Stricklin S.L."/>
            <person name="Sun J."/>
            <person name="Wheeler C."/>
            <person name="Wilson L."/>
            <person name="Zhu H."/>
            <person name="Wood D.W."/>
        </authorList>
    </citation>
    <scope>NUCLEOTIDE SEQUENCE [LARGE SCALE GENOMIC DNA]</scope>
    <source>
        <strain>K84 / ATCC BAA-868</strain>
    </source>
</reference>
<comment type="catalytic activity">
    <reaction evidence="1">
        <text>an N-acyl-L-homoserine lactone + H2O = an N-acyl-L-homoserine + H(+)</text>
        <dbReference type="Rhea" id="RHEA:22576"/>
        <dbReference type="ChEBI" id="CHEBI:15377"/>
        <dbReference type="ChEBI" id="CHEBI:15378"/>
        <dbReference type="ChEBI" id="CHEBI:55474"/>
        <dbReference type="ChEBI" id="CHEBI:58921"/>
        <dbReference type="EC" id="3.1.1.81"/>
    </reaction>
</comment>
<comment type="cofactor">
    <cofactor evidence="1">
        <name>Zn(2+)</name>
        <dbReference type="ChEBI" id="CHEBI:29105"/>
    </cofactor>
    <text evidence="1">Binds 2 Zn(2+) ions per subunit.</text>
</comment>
<comment type="similarity">
    <text evidence="2">Belongs to the metallo-beta-lactamase superfamily.</text>
</comment>
<evidence type="ECO:0000250" key="1">
    <source>
        <dbReference type="UniProtKB" id="A9CKY2"/>
    </source>
</evidence>
<evidence type="ECO:0000305" key="2"/>
<evidence type="ECO:0000312" key="3">
    <source>
        <dbReference type="EMBL" id="ACM31075.1"/>
    </source>
</evidence>
<proteinExistence type="inferred from homology"/>
<name>AHLLB_RHIR8</name>
<accession>B9JPK6</accession>
<feature type="chain" id="PRO_0000403992" description="N-acyl homoserine lactonase AiiB">
    <location>
        <begin position="1"/>
        <end position="276"/>
    </location>
</feature>
<feature type="binding site" evidence="1">
    <location>
        <position position="111"/>
    </location>
    <ligand>
        <name>Zn(2+)</name>
        <dbReference type="ChEBI" id="CHEBI:29105"/>
        <label>1</label>
    </ligand>
</feature>
<feature type="binding site" evidence="1">
    <location>
        <position position="113"/>
    </location>
    <ligand>
        <name>Zn(2+)</name>
        <dbReference type="ChEBI" id="CHEBI:29105"/>
        <label>1</label>
    </ligand>
</feature>
<feature type="binding site" evidence="1">
    <location>
        <position position="116"/>
    </location>
    <ligand>
        <name>Zn(2+)</name>
        <dbReference type="ChEBI" id="CHEBI:29105"/>
        <label>2</label>
    </ligand>
</feature>
<feature type="binding site" evidence="1">
    <location>
        <position position="191"/>
    </location>
    <ligand>
        <name>Zn(2+)</name>
        <dbReference type="ChEBI" id="CHEBI:29105"/>
        <label>1</label>
    </ligand>
</feature>
<feature type="binding site" evidence="1">
    <location>
        <position position="213"/>
    </location>
    <ligand>
        <name>Zn(2+)</name>
        <dbReference type="ChEBI" id="CHEBI:29105"/>
        <label>1</label>
    </ligand>
</feature>
<feature type="binding site" evidence="1">
    <location>
        <position position="213"/>
    </location>
    <ligand>
        <name>Zn(2+)</name>
        <dbReference type="ChEBI" id="CHEBI:29105"/>
        <label>2</label>
    </ligand>
</feature>
<feature type="binding site" evidence="1">
    <location>
        <position position="259"/>
    </location>
    <ligand>
        <name>Zn(2+)</name>
        <dbReference type="ChEBI" id="CHEBI:29105"/>
        <label>2</label>
    </ligand>
</feature>
<sequence>MGNKLFVLDLGEIRVDENFIIANSTFVTPQKPTVSSRLIDIPVSAYLIQCTNATILYDTGCHPECMGTNGRWPAQSQLNAPYIGASECNLPERLRQLDLSPDDISTVVLSHLHNDHAGCVEFFGKSRLIAHEDEFATAVRYFATGDHSSPYIVKDIEAWLATPRNWDLVGRDERERELAPGVNLLNFGTGHASGMLGLAVRLEKQPGFLLVSDACYTATNYGPPARRAGVLHDTIGYDRTVSHIRQYAESRSLTVLFGHDREQFASLIKSTDGFYE</sequence>
<keyword id="KW-0378">Hydrolase</keyword>
<keyword id="KW-0479">Metal-binding</keyword>
<keyword id="KW-0614">Plasmid</keyword>
<keyword id="KW-0862">Zinc</keyword>
<gene>
    <name evidence="1" type="primary">aiiB</name>
    <name type="ordered locus">Arad_14225</name>
</gene>
<dbReference type="EC" id="3.1.1.81"/>
<dbReference type="EMBL" id="CP000630">
    <property type="protein sequence ID" value="ACM31075.1"/>
    <property type="molecule type" value="Genomic_DNA"/>
</dbReference>
<dbReference type="RefSeq" id="WP_012655005.1">
    <property type="nucleotide sequence ID" value="NC_011990.1"/>
</dbReference>
<dbReference type="SMR" id="B9JPK6"/>
<dbReference type="KEGG" id="ara:Arad_14225"/>
<dbReference type="HOGENOM" id="CLU_030571_3_2_5"/>
<dbReference type="Proteomes" id="UP000001600">
    <property type="component" value="Plasmid pAtK84b"/>
</dbReference>
<dbReference type="GO" id="GO:0102007">
    <property type="term" value="F:acyl-L-homoserine-lactone lactonohydrolase activity"/>
    <property type="evidence" value="ECO:0007669"/>
    <property type="project" value="UniProtKB-EC"/>
</dbReference>
<dbReference type="GO" id="GO:0046872">
    <property type="term" value="F:metal ion binding"/>
    <property type="evidence" value="ECO:0007669"/>
    <property type="project" value="UniProtKB-KW"/>
</dbReference>
<dbReference type="CDD" id="cd07729">
    <property type="entry name" value="AHL_lactonase_MBL-fold"/>
    <property type="match status" value="1"/>
</dbReference>
<dbReference type="Gene3D" id="3.60.15.10">
    <property type="entry name" value="Ribonuclease Z/Hydroxyacylglutathione hydrolase-like"/>
    <property type="match status" value="1"/>
</dbReference>
<dbReference type="InterPro" id="IPR051013">
    <property type="entry name" value="MBL_superfamily_lactonases"/>
</dbReference>
<dbReference type="InterPro" id="IPR001279">
    <property type="entry name" value="Metallo-B-lactamas"/>
</dbReference>
<dbReference type="InterPro" id="IPR036866">
    <property type="entry name" value="RibonucZ/Hydroxyglut_hydro"/>
</dbReference>
<dbReference type="PANTHER" id="PTHR42978:SF2">
    <property type="entry name" value="102 KBASES UNSTABLE REGION: FROM 1 TO 119443"/>
    <property type="match status" value="1"/>
</dbReference>
<dbReference type="PANTHER" id="PTHR42978">
    <property type="entry name" value="QUORUM-QUENCHING LACTONASE YTNP-RELATED-RELATED"/>
    <property type="match status" value="1"/>
</dbReference>
<dbReference type="Pfam" id="PF00753">
    <property type="entry name" value="Lactamase_B"/>
    <property type="match status" value="1"/>
</dbReference>
<dbReference type="SMART" id="SM00849">
    <property type="entry name" value="Lactamase_B"/>
    <property type="match status" value="1"/>
</dbReference>
<dbReference type="SUPFAM" id="SSF56281">
    <property type="entry name" value="Metallo-hydrolase/oxidoreductase"/>
    <property type="match status" value="1"/>
</dbReference>